<reference key="1">
    <citation type="journal article" date="2006" name="BMC Biol.">
        <title>The complete chloroplast DNA sequence of the green alga Oltmannsiellopsis viridis reveals a distinctive quadripartite architecture in the chloroplast genome of early diverging ulvophytes.</title>
        <authorList>
            <person name="Pombert J.-F."/>
            <person name="Lemieux C."/>
            <person name="Turmel M."/>
        </authorList>
    </citation>
    <scope>NUCLEOTIDE SEQUENCE [LARGE SCALE GENOMIC DNA]</scope>
</reference>
<comment type="function">
    <text evidence="1">May play a role in photosystem I and II biogenesis.</text>
</comment>
<comment type="subcellular location">
    <subcellularLocation>
        <location evidence="1">Plastid</location>
        <location evidence="1">Chloroplast thylakoid membrane</location>
        <topology evidence="1">Single-pass membrane protein</topology>
    </subcellularLocation>
</comment>
<comment type="similarity">
    <text evidence="1">Belongs to the PsbN family.</text>
</comment>
<comment type="caution">
    <text evidence="1">Originally thought to be a component of PSII; based on experiments in Synechocystis, N.tabacum and barley, and its absence from PSII in T.elongatus and T.vulcanus, this is probably not true.</text>
</comment>
<sequence>MESPAFFFTIFLWCLLLSVTGYSVYVGFGPPSKDLRDPFDEHED</sequence>
<dbReference type="EMBL" id="DQ291132">
    <property type="protein sequence ID" value="ABB81988.1"/>
    <property type="molecule type" value="Genomic_DNA"/>
</dbReference>
<dbReference type="RefSeq" id="YP_635827.1">
    <property type="nucleotide sequence ID" value="NC_008099.1"/>
</dbReference>
<dbReference type="SMR" id="Q20F18"/>
<dbReference type="GeneID" id="4100164"/>
<dbReference type="GO" id="GO:0009535">
    <property type="term" value="C:chloroplast thylakoid membrane"/>
    <property type="evidence" value="ECO:0007669"/>
    <property type="project" value="UniProtKB-SubCell"/>
</dbReference>
<dbReference type="GO" id="GO:0015979">
    <property type="term" value="P:photosynthesis"/>
    <property type="evidence" value="ECO:0007669"/>
    <property type="project" value="InterPro"/>
</dbReference>
<dbReference type="HAMAP" id="MF_00293">
    <property type="entry name" value="PSII_PsbN"/>
    <property type="match status" value="1"/>
</dbReference>
<dbReference type="InterPro" id="IPR003398">
    <property type="entry name" value="PSII_PsbN"/>
</dbReference>
<dbReference type="PANTHER" id="PTHR35326">
    <property type="entry name" value="PROTEIN PSBN"/>
    <property type="match status" value="1"/>
</dbReference>
<dbReference type="PANTHER" id="PTHR35326:SF3">
    <property type="entry name" value="PROTEIN PSBN"/>
    <property type="match status" value="1"/>
</dbReference>
<dbReference type="Pfam" id="PF02468">
    <property type="entry name" value="PsbN"/>
    <property type="match status" value="1"/>
</dbReference>
<geneLocation type="chloroplast"/>
<feature type="chain" id="PRO_0000276274" description="Protein PsbN">
    <location>
        <begin position="1"/>
        <end position="44"/>
    </location>
</feature>
<feature type="transmembrane region" description="Helical" evidence="1">
    <location>
        <begin position="6"/>
        <end position="26"/>
    </location>
</feature>
<evidence type="ECO:0000255" key="1">
    <source>
        <dbReference type="HAMAP-Rule" id="MF_00293"/>
    </source>
</evidence>
<proteinExistence type="inferred from homology"/>
<accession>Q20F18</accession>
<keyword id="KW-0150">Chloroplast</keyword>
<keyword id="KW-0472">Membrane</keyword>
<keyword id="KW-0934">Plastid</keyword>
<keyword id="KW-0793">Thylakoid</keyword>
<keyword id="KW-0812">Transmembrane</keyword>
<keyword id="KW-1133">Transmembrane helix</keyword>
<protein>
    <recommendedName>
        <fullName evidence="1">Protein PsbN</fullName>
    </recommendedName>
</protein>
<organism>
    <name type="scientific">Oltmannsiellopsis viridis</name>
    <name type="common">Marine flagellate</name>
    <name type="synonym">Oltmannsiella viridis</name>
    <dbReference type="NCBI Taxonomy" id="51324"/>
    <lineage>
        <taxon>Eukaryota</taxon>
        <taxon>Viridiplantae</taxon>
        <taxon>Chlorophyta</taxon>
        <taxon>Ulvophyceae</taxon>
        <taxon>Oltmannsiellopsidales</taxon>
        <taxon>Oltmannsiellopsidaceae</taxon>
        <taxon>Oltmannsiellopsis</taxon>
    </lineage>
</organism>
<gene>
    <name evidence="1" type="primary">psbN</name>
</gene>
<name>PSBN_OLTVI</name>